<protein>
    <recommendedName>
        <fullName evidence="1">3-dehydroquinate synthase</fullName>
        <shortName evidence="1">DHQS</shortName>
        <ecNumber evidence="1">4.2.3.4</ecNumber>
    </recommendedName>
</protein>
<gene>
    <name evidence="1" type="primary">aroB</name>
    <name type="ordered locus">FTM_0834</name>
</gene>
<accession>B2SGC9</accession>
<reference key="1">
    <citation type="journal article" date="2009" name="PLoS Pathog.">
        <title>Molecular evolutionary consequences of niche restriction in Francisella tularensis, a facultative intracellular pathogen.</title>
        <authorList>
            <person name="Larsson P."/>
            <person name="Elfsmark D."/>
            <person name="Svensson K."/>
            <person name="Wikstroem P."/>
            <person name="Forsman M."/>
            <person name="Brettin T."/>
            <person name="Keim P."/>
            <person name="Johansson A."/>
        </authorList>
    </citation>
    <scope>NUCLEOTIDE SEQUENCE [LARGE SCALE GENOMIC DNA]</scope>
    <source>
        <strain>FSC147</strain>
    </source>
</reference>
<comment type="function">
    <text evidence="1">Catalyzes the conversion of 3-deoxy-D-arabino-heptulosonate 7-phosphate (DAHP) to dehydroquinate (DHQ).</text>
</comment>
<comment type="catalytic activity">
    <reaction evidence="1">
        <text>7-phospho-2-dehydro-3-deoxy-D-arabino-heptonate = 3-dehydroquinate + phosphate</text>
        <dbReference type="Rhea" id="RHEA:21968"/>
        <dbReference type="ChEBI" id="CHEBI:32364"/>
        <dbReference type="ChEBI" id="CHEBI:43474"/>
        <dbReference type="ChEBI" id="CHEBI:58394"/>
        <dbReference type="EC" id="4.2.3.4"/>
    </reaction>
</comment>
<comment type="cofactor">
    <cofactor evidence="1">
        <name>Co(2+)</name>
        <dbReference type="ChEBI" id="CHEBI:48828"/>
    </cofactor>
    <cofactor evidence="1">
        <name>Zn(2+)</name>
        <dbReference type="ChEBI" id="CHEBI:29105"/>
    </cofactor>
    <text evidence="1">Binds 1 divalent metal cation per subunit. Can use either Co(2+) or Zn(2+).</text>
</comment>
<comment type="cofactor">
    <cofactor evidence="1">
        <name>NAD(+)</name>
        <dbReference type="ChEBI" id="CHEBI:57540"/>
    </cofactor>
</comment>
<comment type="pathway">
    <text evidence="1">Metabolic intermediate biosynthesis; chorismate biosynthesis; chorismate from D-erythrose 4-phosphate and phosphoenolpyruvate: step 2/7.</text>
</comment>
<comment type="subcellular location">
    <subcellularLocation>
        <location evidence="1">Cytoplasm</location>
    </subcellularLocation>
</comment>
<comment type="similarity">
    <text evidence="1">Belongs to the sugar phosphate cyclases superfamily. Dehydroquinate synthase family.</text>
</comment>
<organism>
    <name type="scientific">Francisella tularensis subsp. mediasiatica (strain FSC147)</name>
    <dbReference type="NCBI Taxonomy" id="441952"/>
    <lineage>
        <taxon>Bacteria</taxon>
        <taxon>Pseudomonadati</taxon>
        <taxon>Pseudomonadota</taxon>
        <taxon>Gammaproteobacteria</taxon>
        <taxon>Thiotrichales</taxon>
        <taxon>Francisellaceae</taxon>
        <taxon>Francisella</taxon>
    </lineage>
</organism>
<name>AROB_FRATM</name>
<dbReference type="EC" id="4.2.3.4" evidence="1"/>
<dbReference type="EMBL" id="CP000915">
    <property type="protein sequence ID" value="ACD30788.1"/>
    <property type="molecule type" value="Genomic_DNA"/>
</dbReference>
<dbReference type="SMR" id="B2SGC9"/>
<dbReference type="KEGG" id="ftm:FTM_0834"/>
<dbReference type="HOGENOM" id="CLU_001201_0_2_6"/>
<dbReference type="UniPathway" id="UPA00053">
    <property type="reaction ID" value="UER00085"/>
</dbReference>
<dbReference type="GO" id="GO:0005737">
    <property type="term" value="C:cytoplasm"/>
    <property type="evidence" value="ECO:0007669"/>
    <property type="project" value="UniProtKB-SubCell"/>
</dbReference>
<dbReference type="GO" id="GO:0003856">
    <property type="term" value="F:3-dehydroquinate synthase activity"/>
    <property type="evidence" value="ECO:0007669"/>
    <property type="project" value="UniProtKB-UniRule"/>
</dbReference>
<dbReference type="GO" id="GO:0046872">
    <property type="term" value="F:metal ion binding"/>
    <property type="evidence" value="ECO:0007669"/>
    <property type="project" value="UniProtKB-KW"/>
</dbReference>
<dbReference type="GO" id="GO:0000166">
    <property type="term" value="F:nucleotide binding"/>
    <property type="evidence" value="ECO:0007669"/>
    <property type="project" value="UniProtKB-KW"/>
</dbReference>
<dbReference type="GO" id="GO:0008652">
    <property type="term" value="P:amino acid biosynthetic process"/>
    <property type="evidence" value="ECO:0007669"/>
    <property type="project" value="UniProtKB-KW"/>
</dbReference>
<dbReference type="GO" id="GO:0009073">
    <property type="term" value="P:aromatic amino acid family biosynthetic process"/>
    <property type="evidence" value="ECO:0007669"/>
    <property type="project" value="UniProtKB-KW"/>
</dbReference>
<dbReference type="GO" id="GO:0009423">
    <property type="term" value="P:chorismate biosynthetic process"/>
    <property type="evidence" value="ECO:0007669"/>
    <property type="project" value="UniProtKB-UniRule"/>
</dbReference>
<dbReference type="CDD" id="cd08195">
    <property type="entry name" value="DHQS"/>
    <property type="match status" value="1"/>
</dbReference>
<dbReference type="FunFam" id="3.40.50.1970:FF:000001">
    <property type="entry name" value="3-dehydroquinate synthase"/>
    <property type="match status" value="1"/>
</dbReference>
<dbReference type="Gene3D" id="3.40.50.1970">
    <property type="match status" value="1"/>
</dbReference>
<dbReference type="Gene3D" id="1.20.1090.10">
    <property type="entry name" value="Dehydroquinate synthase-like - alpha domain"/>
    <property type="match status" value="1"/>
</dbReference>
<dbReference type="HAMAP" id="MF_00110">
    <property type="entry name" value="DHQ_synthase"/>
    <property type="match status" value="1"/>
</dbReference>
<dbReference type="InterPro" id="IPR050071">
    <property type="entry name" value="Dehydroquinate_synthase"/>
</dbReference>
<dbReference type="InterPro" id="IPR016037">
    <property type="entry name" value="DHQ_synth_AroB"/>
</dbReference>
<dbReference type="InterPro" id="IPR030963">
    <property type="entry name" value="DHQ_synth_fam"/>
</dbReference>
<dbReference type="InterPro" id="IPR030960">
    <property type="entry name" value="DHQS/DOIS_N"/>
</dbReference>
<dbReference type="InterPro" id="IPR056179">
    <property type="entry name" value="DHQS_C"/>
</dbReference>
<dbReference type="NCBIfam" id="TIGR01357">
    <property type="entry name" value="aroB"/>
    <property type="match status" value="1"/>
</dbReference>
<dbReference type="PANTHER" id="PTHR43622">
    <property type="entry name" value="3-DEHYDROQUINATE SYNTHASE"/>
    <property type="match status" value="1"/>
</dbReference>
<dbReference type="PANTHER" id="PTHR43622:SF7">
    <property type="entry name" value="3-DEHYDROQUINATE SYNTHASE, CHLOROPLASTIC"/>
    <property type="match status" value="1"/>
</dbReference>
<dbReference type="Pfam" id="PF01761">
    <property type="entry name" value="DHQ_synthase"/>
    <property type="match status" value="1"/>
</dbReference>
<dbReference type="Pfam" id="PF24621">
    <property type="entry name" value="DHQS_C"/>
    <property type="match status" value="1"/>
</dbReference>
<dbReference type="PIRSF" id="PIRSF001455">
    <property type="entry name" value="DHQ_synth"/>
    <property type="match status" value="1"/>
</dbReference>
<dbReference type="SUPFAM" id="SSF56796">
    <property type="entry name" value="Dehydroquinate synthase-like"/>
    <property type="match status" value="1"/>
</dbReference>
<evidence type="ECO:0000255" key="1">
    <source>
        <dbReference type="HAMAP-Rule" id="MF_00110"/>
    </source>
</evidence>
<sequence length="359" mass="40196">MISKLSVNPTFSPSYNIIVDSVLDFSHILEYVTNKQVLVVTNTTVAKLYLTKFLPALVDDLDVRTCILEDGEQYKSQQSLDKILSTLLENHFTRNSTVLVALGGGVIGDITGFAAAIYQRGIDFIQIPTTLLSQVDSSVGGKTAINHQLGKNMIGAFYQPKVVYTSIEFYKTLPQREYIAGMAEVVKYAFISKDFYLWLDSNRDKILAKDSVTLIEMVKRSCQIKAQVVAMDEKELTGARAILNFGHTFGHAIEKCQNYRGLKHGEAVGVGMAQAIDFSHYLGLISQQQAKDFKDFIVSFGISIDFPNDICQKEFLEAMLLDKKNSNKELKFILIENIGSLSLQKQSKNELEQFLDISR</sequence>
<keyword id="KW-0028">Amino-acid biosynthesis</keyword>
<keyword id="KW-0057">Aromatic amino acid biosynthesis</keyword>
<keyword id="KW-0170">Cobalt</keyword>
<keyword id="KW-0963">Cytoplasm</keyword>
<keyword id="KW-0456">Lyase</keyword>
<keyword id="KW-0479">Metal-binding</keyword>
<keyword id="KW-0520">NAD</keyword>
<keyword id="KW-0547">Nucleotide-binding</keyword>
<keyword id="KW-0862">Zinc</keyword>
<proteinExistence type="inferred from homology"/>
<feature type="chain" id="PRO_1000094520" description="3-dehydroquinate synthase">
    <location>
        <begin position="1"/>
        <end position="359"/>
    </location>
</feature>
<feature type="binding site" evidence="1">
    <location>
        <begin position="70"/>
        <end position="75"/>
    </location>
    <ligand>
        <name>NAD(+)</name>
        <dbReference type="ChEBI" id="CHEBI:57540"/>
    </ligand>
</feature>
<feature type="binding site" evidence="1">
    <location>
        <begin position="105"/>
        <end position="109"/>
    </location>
    <ligand>
        <name>NAD(+)</name>
        <dbReference type="ChEBI" id="CHEBI:57540"/>
    </ligand>
</feature>
<feature type="binding site" evidence="1">
    <location>
        <begin position="129"/>
        <end position="130"/>
    </location>
    <ligand>
        <name>NAD(+)</name>
        <dbReference type="ChEBI" id="CHEBI:57540"/>
    </ligand>
</feature>
<feature type="binding site" evidence="1">
    <location>
        <position position="142"/>
    </location>
    <ligand>
        <name>NAD(+)</name>
        <dbReference type="ChEBI" id="CHEBI:57540"/>
    </ligand>
</feature>
<feature type="binding site" evidence="1">
    <location>
        <position position="151"/>
    </location>
    <ligand>
        <name>NAD(+)</name>
        <dbReference type="ChEBI" id="CHEBI:57540"/>
    </ligand>
</feature>
<feature type="binding site" evidence="1">
    <location>
        <begin position="169"/>
        <end position="172"/>
    </location>
    <ligand>
        <name>NAD(+)</name>
        <dbReference type="ChEBI" id="CHEBI:57540"/>
    </ligand>
</feature>
<feature type="binding site" evidence="1">
    <location>
        <position position="184"/>
    </location>
    <ligand>
        <name>Zn(2+)</name>
        <dbReference type="ChEBI" id="CHEBI:29105"/>
    </ligand>
</feature>
<feature type="binding site" evidence="1">
    <location>
        <position position="247"/>
    </location>
    <ligand>
        <name>Zn(2+)</name>
        <dbReference type="ChEBI" id="CHEBI:29105"/>
    </ligand>
</feature>
<feature type="binding site" evidence="1">
    <location>
        <position position="264"/>
    </location>
    <ligand>
        <name>Zn(2+)</name>
        <dbReference type="ChEBI" id="CHEBI:29105"/>
    </ligand>
</feature>